<feature type="chain" id="PRO_1000186463" description="Bifunctional protein GlmU">
    <location>
        <begin position="1"/>
        <end position="455"/>
    </location>
</feature>
<feature type="region of interest" description="Pyrophosphorylase" evidence="1">
    <location>
        <begin position="1"/>
        <end position="230"/>
    </location>
</feature>
<feature type="region of interest" description="Linker" evidence="1">
    <location>
        <begin position="231"/>
        <end position="251"/>
    </location>
</feature>
<feature type="region of interest" description="N-acetyltransferase" evidence="1">
    <location>
        <begin position="252"/>
        <end position="455"/>
    </location>
</feature>
<feature type="active site" description="Proton acceptor" evidence="1">
    <location>
        <position position="363"/>
    </location>
</feature>
<feature type="binding site" evidence="1">
    <location>
        <begin position="9"/>
        <end position="12"/>
    </location>
    <ligand>
        <name>UDP-N-acetyl-alpha-D-glucosamine</name>
        <dbReference type="ChEBI" id="CHEBI:57705"/>
    </ligand>
</feature>
<feature type="binding site" evidence="1">
    <location>
        <position position="23"/>
    </location>
    <ligand>
        <name>UDP-N-acetyl-alpha-D-glucosamine</name>
        <dbReference type="ChEBI" id="CHEBI:57705"/>
    </ligand>
</feature>
<feature type="binding site" evidence="1">
    <location>
        <position position="73"/>
    </location>
    <ligand>
        <name>UDP-N-acetyl-alpha-D-glucosamine</name>
        <dbReference type="ChEBI" id="CHEBI:57705"/>
    </ligand>
</feature>
<feature type="binding site" evidence="1">
    <location>
        <begin position="78"/>
        <end position="79"/>
    </location>
    <ligand>
        <name>UDP-N-acetyl-alpha-D-glucosamine</name>
        <dbReference type="ChEBI" id="CHEBI:57705"/>
    </ligand>
</feature>
<feature type="binding site" evidence="1">
    <location>
        <begin position="101"/>
        <end position="103"/>
    </location>
    <ligand>
        <name>UDP-N-acetyl-alpha-D-glucosamine</name>
        <dbReference type="ChEBI" id="CHEBI:57705"/>
    </ligand>
</feature>
<feature type="binding site" evidence="1">
    <location>
        <position position="103"/>
    </location>
    <ligand>
        <name>Mg(2+)</name>
        <dbReference type="ChEBI" id="CHEBI:18420"/>
    </ligand>
</feature>
<feature type="binding site" evidence="1">
    <location>
        <position position="140"/>
    </location>
    <ligand>
        <name>UDP-N-acetyl-alpha-D-glucosamine</name>
        <dbReference type="ChEBI" id="CHEBI:57705"/>
    </ligand>
</feature>
<feature type="binding site" evidence="1">
    <location>
        <position position="155"/>
    </location>
    <ligand>
        <name>UDP-N-acetyl-alpha-D-glucosamine</name>
        <dbReference type="ChEBI" id="CHEBI:57705"/>
    </ligand>
</feature>
<feature type="binding site" evidence="1">
    <location>
        <position position="170"/>
    </location>
    <ligand>
        <name>UDP-N-acetyl-alpha-D-glucosamine</name>
        <dbReference type="ChEBI" id="CHEBI:57705"/>
    </ligand>
</feature>
<feature type="binding site" evidence="1">
    <location>
        <position position="228"/>
    </location>
    <ligand>
        <name>Mg(2+)</name>
        <dbReference type="ChEBI" id="CHEBI:18420"/>
    </ligand>
</feature>
<feature type="binding site" evidence="1">
    <location>
        <position position="228"/>
    </location>
    <ligand>
        <name>UDP-N-acetyl-alpha-D-glucosamine</name>
        <dbReference type="ChEBI" id="CHEBI:57705"/>
    </ligand>
</feature>
<feature type="binding site" evidence="1">
    <location>
        <position position="333"/>
    </location>
    <ligand>
        <name>UDP-N-acetyl-alpha-D-glucosamine</name>
        <dbReference type="ChEBI" id="CHEBI:57705"/>
    </ligand>
</feature>
<feature type="binding site" evidence="1">
    <location>
        <position position="351"/>
    </location>
    <ligand>
        <name>UDP-N-acetyl-alpha-D-glucosamine</name>
        <dbReference type="ChEBI" id="CHEBI:57705"/>
    </ligand>
</feature>
<feature type="binding site" evidence="1">
    <location>
        <position position="366"/>
    </location>
    <ligand>
        <name>UDP-N-acetyl-alpha-D-glucosamine</name>
        <dbReference type="ChEBI" id="CHEBI:57705"/>
    </ligand>
</feature>
<feature type="binding site" evidence="1">
    <location>
        <position position="377"/>
    </location>
    <ligand>
        <name>UDP-N-acetyl-alpha-D-glucosamine</name>
        <dbReference type="ChEBI" id="CHEBI:57705"/>
    </ligand>
</feature>
<feature type="binding site" evidence="1">
    <location>
        <begin position="386"/>
        <end position="387"/>
    </location>
    <ligand>
        <name>acetyl-CoA</name>
        <dbReference type="ChEBI" id="CHEBI:57288"/>
    </ligand>
</feature>
<feature type="binding site" evidence="1">
    <location>
        <position position="405"/>
    </location>
    <ligand>
        <name>acetyl-CoA</name>
        <dbReference type="ChEBI" id="CHEBI:57288"/>
    </ligand>
</feature>
<feature type="binding site" evidence="1">
    <location>
        <position position="423"/>
    </location>
    <ligand>
        <name>acetyl-CoA</name>
        <dbReference type="ChEBI" id="CHEBI:57288"/>
    </ligand>
</feature>
<feature type="binding site" evidence="1">
    <location>
        <position position="440"/>
    </location>
    <ligand>
        <name>acetyl-CoA</name>
        <dbReference type="ChEBI" id="CHEBI:57288"/>
    </ligand>
</feature>
<sequence>MVNKNAIILAAGKGTRMKSKLHKVLHQVCGKTMVEHVLTQLQAADIQNIVTVVGYGADTVKDALGDQVRYALQKQQLGTGHAVMQTEDLLGELAGQTLVVSGDTPLFTAATFNHLFQYHEQRHAAVTILTSKAPDPTGYGRIVRNEIGIVERIVEQKDASVEEQAIHEINTGVYCFDNQKLFAALKRLTNDNAQGEYYLTDVIGILKEEGEIVTAYQMEDFDESMGVNDRSALAKATKIMQKRINTQLMKDGVTLVDPETAYIDTDVQIGQDTVIEGNVVIKGRTTIGADCLIGAGSRIEDSTLHDDVTIMSSTLERSEVHSGADVGPNSHLRPEAELGENVHVGNFCEVKKAYIGAGTKVGHLSYIGDATLGKNINVGCGVVFVNYDGTNKLHTNVGDHAFIGSNSNIVAPVNIAADSFVAAGSTITDSTEQFDMAIARARQVNKPGYAKKLPW</sequence>
<organism>
    <name type="scientific">Limosilactobacillus fermentum (strain NBRC 3956 / LMG 18251)</name>
    <name type="common">Lactobacillus fermentum</name>
    <dbReference type="NCBI Taxonomy" id="334390"/>
    <lineage>
        <taxon>Bacteria</taxon>
        <taxon>Bacillati</taxon>
        <taxon>Bacillota</taxon>
        <taxon>Bacilli</taxon>
        <taxon>Lactobacillales</taxon>
        <taxon>Lactobacillaceae</taxon>
        <taxon>Limosilactobacillus</taxon>
    </lineage>
</organism>
<keyword id="KW-0012">Acyltransferase</keyword>
<keyword id="KW-0133">Cell shape</keyword>
<keyword id="KW-0961">Cell wall biogenesis/degradation</keyword>
<keyword id="KW-0963">Cytoplasm</keyword>
<keyword id="KW-0460">Magnesium</keyword>
<keyword id="KW-0479">Metal-binding</keyword>
<keyword id="KW-0511">Multifunctional enzyme</keyword>
<keyword id="KW-0548">Nucleotidyltransferase</keyword>
<keyword id="KW-0573">Peptidoglycan synthesis</keyword>
<keyword id="KW-1185">Reference proteome</keyword>
<keyword id="KW-0677">Repeat</keyword>
<keyword id="KW-0808">Transferase</keyword>
<accession>B2GFE2</accession>
<dbReference type="EC" id="2.7.7.23" evidence="1"/>
<dbReference type="EC" id="2.3.1.157" evidence="1"/>
<dbReference type="EMBL" id="AP008937">
    <property type="protein sequence ID" value="BAG26531.1"/>
    <property type="molecule type" value="Genomic_DNA"/>
</dbReference>
<dbReference type="RefSeq" id="WP_012390797.1">
    <property type="nucleotide sequence ID" value="NC_010610.1"/>
</dbReference>
<dbReference type="SMR" id="B2GFE2"/>
<dbReference type="KEGG" id="lfe:LAF_0195"/>
<dbReference type="eggNOG" id="COG1207">
    <property type="taxonomic scope" value="Bacteria"/>
</dbReference>
<dbReference type="HOGENOM" id="CLU_029499_15_2_9"/>
<dbReference type="UniPathway" id="UPA00113">
    <property type="reaction ID" value="UER00532"/>
</dbReference>
<dbReference type="UniPathway" id="UPA00113">
    <property type="reaction ID" value="UER00533"/>
</dbReference>
<dbReference type="UniPathway" id="UPA00973"/>
<dbReference type="Proteomes" id="UP000001697">
    <property type="component" value="Chromosome"/>
</dbReference>
<dbReference type="GO" id="GO:0005737">
    <property type="term" value="C:cytoplasm"/>
    <property type="evidence" value="ECO:0007669"/>
    <property type="project" value="UniProtKB-SubCell"/>
</dbReference>
<dbReference type="GO" id="GO:0016020">
    <property type="term" value="C:membrane"/>
    <property type="evidence" value="ECO:0007669"/>
    <property type="project" value="GOC"/>
</dbReference>
<dbReference type="GO" id="GO:0019134">
    <property type="term" value="F:glucosamine-1-phosphate N-acetyltransferase activity"/>
    <property type="evidence" value="ECO:0007669"/>
    <property type="project" value="UniProtKB-UniRule"/>
</dbReference>
<dbReference type="GO" id="GO:0000287">
    <property type="term" value="F:magnesium ion binding"/>
    <property type="evidence" value="ECO:0007669"/>
    <property type="project" value="UniProtKB-UniRule"/>
</dbReference>
<dbReference type="GO" id="GO:0003977">
    <property type="term" value="F:UDP-N-acetylglucosamine diphosphorylase activity"/>
    <property type="evidence" value="ECO:0007669"/>
    <property type="project" value="UniProtKB-UniRule"/>
</dbReference>
<dbReference type="GO" id="GO:0000902">
    <property type="term" value="P:cell morphogenesis"/>
    <property type="evidence" value="ECO:0007669"/>
    <property type="project" value="UniProtKB-UniRule"/>
</dbReference>
<dbReference type="GO" id="GO:0071555">
    <property type="term" value="P:cell wall organization"/>
    <property type="evidence" value="ECO:0007669"/>
    <property type="project" value="UniProtKB-KW"/>
</dbReference>
<dbReference type="GO" id="GO:0009245">
    <property type="term" value="P:lipid A biosynthetic process"/>
    <property type="evidence" value="ECO:0007669"/>
    <property type="project" value="UniProtKB-UniRule"/>
</dbReference>
<dbReference type="GO" id="GO:0009252">
    <property type="term" value="P:peptidoglycan biosynthetic process"/>
    <property type="evidence" value="ECO:0007669"/>
    <property type="project" value="UniProtKB-UniRule"/>
</dbReference>
<dbReference type="GO" id="GO:0008360">
    <property type="term" value="P:regulation of cell shape"/>
    <property type="evidence" value="ECO:0007669"/>
    <property type="project" value="UniProtKB-KW"/>
</dbReference>
<dbReference type="GO" id="GO:0006048">
    <property type="term" value="P:UDP-N-acetylglucosamine biosynthetic process"/>
    <property type="evidence" value="ECO:0007669"/>
    <property type="project" value="UniProtKB-UniPathway"/>
</dbReference>
<dbReference type="CDD" id="cd02540">
    <property type="entry name" value="GT2_GlmU_N_bac"/>
    <property type="match status" value="1"/>
</dbReference>
<dbReference type="CDD" id="cd03353">
    <property type="entry name" value="LbH_GlmU_C"/>
    <property type="match status" value="1"/>
</dbReference>
<dbReference type="Gene3D" id="2.160.10.10">
    <property type="entry name" value="Hexapeptide repeat proteins"/>
    <property type="match status" value="1"/>
</dbReference>
<dbReference type="Gene3D" id="3.90.550.10">
    <property type="entry name" value="Spore Coat Polysaccharide Biosynthesis Protein SpsA, Chain A"/>
    <property type="match status" value="1"/>
</dbReference>
<dbReference type="HAMAP" id="MF_01631">
    <property type="entry name" value="GlmU"/>
    <property type="match status" value="1"/>
</dbReference>
<dbReference type="InterPro" id="IPR005882">
    <property type="entry name" value="Bifunctional_GlmU"/>
</dbReference>
<dbReference type="InterPro" id="IPR050065">
    <property type="entry name" value="GlmU-like"/>
</dbReference>
<dbReference type="InterPro" id="IPR038009">
    <property type="entry name" value="GlmU_C_LbH"/>
</dbReference>
<dbReference type="InterPro" id="IPR001451">
    <property type="entry name" value="Hexapep"/>
</dbReference>
<dbReference type="InterPro" id="IPR005835">
    <property type="entry name" value="NTP_transferase_dom"/>
</dbReference>
<dbReference type="InterPro" id="IPR029044">
    <property type="entry name" value="Nucleotide-diphossugar_trans"/>
</dbReference>
<dbReference type="InterPro" id="IPR011004">
    <property type="entry name" value="Trimer_LpxA-like_sf"/>
</dbReference>
<dbReference type="NCBIfam" id="TIGR01173">
    <property type="entry name" value="glmU"/>
    <property type="match status" value="1"/>
</dbReference>
<dbReference type="NCBIfam" id="NF010934">
    <property type="entry name" value="PRK14354.1"/>
    <property type="match status" value="1"/>
</dbReference>
<dbReference type="PANTHER" id="PTHR43584:SF3">
    <property type="entry name" value="BIFUNCTIONAL PROTEIN GLMU"/>
    <property type="match status" value="1"/>
</dbReference>
<dbReference type="PANTHER" id="PTHR43584">
    <property type="entry name" value="NUCLEOTIDYL TRANSFERASE"/>
    <property type="match status" value="1"/>
</dbReference>
<dbReference type="Pfam" id="PF00132">
    <property type="entry name" value="Hexapep"/>
    <property type="match status" value="1"/>
</dbReference>
<dbReference type="Pfam" id="PF14602">
    <property type="entry name" value="Hexapep_2"/>
    <property type="match status" value="1"/>
</dbReference>
<dbReference type="Pfam" id="PF00483">
    <property type="entry name" value="NTP_transferase"/>
    <property type="match status" value="1"/>
</dbReference>
<dbReference type="SUPFAM" id="SSF53448">
    <property type="entry name" value="Nucleotide-diphospho-sugar transferases"/>
    <property type="match status" value="1"/>
</dbReference>
<dbReference type="SUPFAM" id="SSF51161">
    <property type="entry name" value="Trimeric LpxA-like enzymes"/>
    <property type="match status" value="1"/>
</dbReference>
<name>GLMU_LIMF3</name>
<reference key="1">
    <citation type="journal article" date="2008" name="DNA Res.">
        <title>Comparative genome analysis of Lactobacillus reuteri and Lactobacillus fermentum reveal a genomic island for reuterin and cobalamin production.</title>
        <authorList>
            <person name="Morita H."/>
            <person name="Toh H."/>
            <person name="Fukuda S."/>
            <person name="Horikawa H."/>
            <person name="Oshima K."/>
            <person name="Suzuki T."/>
            <person name="Murakami M."/>
            <person name="Hisamatsu S."/>
            <person name="Kato Y."/>
            <person name="Takizawa T."/>
            <person name="Fukuoka H."/>
            <person name="Yoshimura T."/>
            <person name="Itoh K."/>
            <person name="O'Sullivan D.J."/>
            <person name="McKay L.L."/>
            <person name="Ohno H."/>
            <person name="Kikuchi J."/>
            <person name="Masaoka T."/>
            <person name="Hattori M."/>
        </authorList>
    </citation>
    <scope>NUCLEOTIDE SEQUENCE [LARGE SCALE GENOMIC DNA]</scope>
    <source>
        <strain>NBRC 3956 / LMG 18251</strain>
    </source>
</reference>
<protein>
    <recommendedName>
        <fullName evidence="1">Bifunctional protein GlmU</fullName>
    </recommendedName>
    <domain>
        <recommendedName>
            <fullName evidence="1">UDP-N-acetylglucosamine pyrophosphorylase</fullName>
            <ecNumber evidence="1">2.7.7.23</ecNumber>
        </recommendedName>
        <alternativeName>
            <fullName evidence="1">N-acetylglucosamine-1-phosphate uridyltransferase</fullName>
        </alternativeName>
    </domain>
    <domain>
        <recommendedName>
            <fullName evidence="1">Glucosamine-1-phosphate N-acetyltransferase</fullName>
            <ecNumber evidence="1">2.3.1.157</ecNumber>
        </recommendedName>
    </domain>
</protein>
<comment type="function">
    <text evidence="1">Catalyzes the last two sequential reactions in the de novo biosynthetic pathway for UDP-N-acetylglucosamine (UDP-GlcNAc). The C-terminal domain catalyzes the transfer of acetyl group from acetyl coenzyme A to glucosamine-1-phosphate (GlcN-1-P) to produce N-acetylglucosamine-1-phosphate (GlcNAc-1-P), which is converted into UDP-GlcNAc by the transfer of uridine 5-monophosphate (from uridine 5-triphosphate), a reaction catalyzed by the N-terminal domain.</text>
</comment>
<comment type="catalytic activity">
    <reaction evidence="1">
        <text>alpha-D-glucosamine 1-phosphate + acetyl-CoA = N-acetyl-alpha-D-glucosamine 1-phosphate + CoA + H(+)</text>
        <dbReference type="Rhea" id="RHEA:13725"/>
        <dbReference type="ChEBI" id="CHEBI:15378"/>
        <dbReference type="ChEBI" id="CHEBI:57287"/>
        <dbReference type="ChEBI" id="CHEBI:57288"/>
        <dbReference type="ChEBI" id="CHEBI:57776"/>
        <dbReference type="ChEBI" id="CHEBI:58516"/>
        <dbReference type="EC" id="2.3.1.157"/>
    </reaction>
</comment>
<comment type="catalytic activity">
    <reaction evidence="1">
        <text>N-acetyl-alpha-D-glucosamine 1-phosphate + UTP + H(+) = UDP-N-acetyl-alpha-D-glucosamine + diphosphate</text>
        <dbReference type="Rhea" id="RHEA:13509"/>
        <dbReference type="ChEBI" id="CHEBI:15378"/>
        <dbReference type="ChEBI" id="CHEBI:33019"/>
        <dbReference type="ChEBI" id="CHEBI:46398"/>
        <dbReference type="ChEBI" id="CHEBI:57705"/>
        <dbReference type="ChEBI" id="CHEBI:57776"/>
        <dbReference type="EC" id="2.7.7.23"/>
    </reaction>
</comment>
<comment type="cofactor">
    <cofactor evidence="1">
        <name>Mg(2+)</name>
        <dbReference type="ChEBI" id="CHEBI:18420"/>
    </cofactor>
    <text evidence="1">Binds 1 Mg(2+) ion per subunit.</text>
</comment>
<comment type="pathway">
    <text evidence="1">Nucleotide-sugar biosynthesis; UDP-N-acetyl-alpha-D-glucosamine biosynthesis; N-acetyl-alpha-D-glucosamine 1-phosphate from alpha-D-glucosamine 6-phosphate (route II): step 2/2.</text>
</comment>
<comment type="pathway">
    <text evidence="1">Nucleotide-sugar biosynthesis; UDP-N-acetyl-alpha-D-glucosamine biosynthesis; UDP-N-acetyl-alpha-D-glucosamine from N-acetyl-alpha-D-glucosamine 1-phosphate: step 1/1.</text>
</comment>
<comment type="pathway">
    <text evidence="1">Bacterial outer membrane biogenesis; LPS lipid A biosynthesis.</text>
</comment>
<comment type="subunit">
    <text evidence="1">Homotrimer.</text>
</comment>
<comment type="subcellular location">
    <subcellularLocation>
        <location evidence="1">Cytoplasm</location>
    </subcellularLocation>
</comment>
<comment type="similarity">
    <text evidence="1">In the N-terminal section; belongs to the N-acetylglucosamine-1-phosphate uridyltransferase family.</text>
</comment>
<comment type="similarity">
    <text evidence="1">In the C-terminal section; belongs to the transferase hexapeptide repeat family.</text>
</comment>
<evidence type="ECO:0000255" key="1">
    <source>
        <dbReference type="HAMAP-Rule" id="MF_01631"/>
    </source>
</evidence>
<proteinExistence type="inferred from homology"/>
<gene>
    <name evidence="1" type="primary">glmU</name>
    <name type="ordered locus">LAF_0195</name>
</gene>